<keyword id="KW-0963">Cytoplasm</keyword>
<keyword id="KW-0413">Isomerase</keyword>
<keyword id="KW-0627">Porphyrin biosynthesis</keyword>
<keyword id="KW-0663">Pyridoxal phosphate</keyword>
<keyword id="KW-1185">Reference proteome</keyword>
<proteinExistence type="inferred from homology"/>
<evidence type="ECO:0000255" key="1">
    <source>
        <dbReference type="HAMAP-Rule" id="MF_00375"/>
    </source>
</evidence>
<dbReference type="EC" id="5.4.3.8" evidence="1"/>
<dbReference type="EMBL" id="CP000783">
    <property type="protein sequence ID" value="ABU78408.1"/>
    <property type="molecule type" value="Genomic_DNA"/>
</dbReference>
<dbReference type="RefSeq" id="WP_012125721.1">
    <property type="nucleotide sequence ID" value="NC_009778.1"/>
</dbReference>
<dbReference type="SMR" id="A7MGR5"/>
<dbReference type="KEGG" id="esa:ESA_03186"/>
<dbReference type="PATRIC" id="fig|290339.8.peg.2817"/>
<dbReference type="HOGENOM" id="CLU_016922_1_5_6"/>
<dbReference type="UniPathway" id="UPA00251">
    <property type="reaction ID" value="UER00317"/>
</dbReference>
<dbReference type="Proteomes" id="UP000000260">
    <property type="component" value="Chromosome"/>
</dbReference>
<dbReference type="GO" id="GO:0005737">
    <property type="term" value="C:cytoplasm"/>
    <property type="evidence" value="ECO:0007669"/>
    <property type="project" value="UniProtKB-SubCell"/>
</dbReference>
<dbReference type="GO" id="GO:0042286">
    <property type="term" value="F:glutamate-1-semialdehyde 2,1-aminomutase activity"/>
    <property type="evidence" value="ECO:0007669"/>
    <property type="project" value="UniProtKB-UniRule"/>
</dbReference>
<dbReference type="GO" id="GO:0030170">
    <property type="term" value="F:pyridoxal phosphate binding"/>
    <property type="evidence" value="ECO:0007669"/>
    <property type="project" value="InterPro"/>
</dbReference>
<dbReference type="GO" id="GO:0008483">
    <property type="term" value="F:transaminase activity"/>
    <property type="evidence" value="ECO:0007669"/>
    <property type="project" value="InterPro"/>
</dbReference>
<dbReference type="GO" id="GO:0006782">
    <property type="term" value="P:protoporphyrinogen IX biosynthetic process"/>
    <property type="evidence" value="ECO:0007669"/>
    <property type="project" value="UniProtKB-UniRule"/>
</dbReference>
<dbReference type="CDD" id="cd00610">
    <property type="entry name" value="OAT_like"/>
    <property type="match status" value="1"/>
</dbReference>
<dbReference type="FunFam" id="3.40.640.10:FF:000021">
    <property type="entry name" value="Glutamate-1-semialdehyde 2,1-aminomutase"/>
    <property type="match status" value="1"/>
</dbReference>
<dbReference type="FunFam" id="3.90.1150.10:FF:000012">
    <property type="entry name" value="Glutamate-1-semialdehyde 2,1-aminomutase"/>
    <property type="match status" value="1"/>
</dbReference>
<dbReference type="Gene3D" id="3.90.1150.10">
    <property type="entry name" value="Aspartate Aminotransferase, domain 1"/>
    <property type="match status" value="1"/>
</dbReference>
<dbReference type="Gene3D" id="3.40.640.10">
    <property type="entry name" value="Type I PLP-dependent aspartate aminotransferase-like (Major domain)"/>
    <property type="match status" value="1"/>
</dbReference>
<dbReference type="HAMAP" id="MF_00375">
    <property type="entry name" value="HemL_aminotrans_3"/>
    <property type="match status" value="1"/>
</dbReference>
<dbReference type="InterPro" id="IPR004639">
    <property type="entry name" value="4pyrrol_synth_GluAld_NH2Trfase"/>
</dbReference>
<dbReference type="InterPro" id="IPR005814">
    <property type="entry name" value="Aminotrans_3"/>
</dbReference>
<dbReference type="InterPro" id="IPR049704">
    <property type="entry name" value="Aminotrans_3_PPA_site"/>
</dbReference>
<dbReference type="InterPro" id="IPR015424">
    <property type="entry name" value="PyrdxlP-dep_Trfase"/>
</dbReference>
<dbReference type="InterPro" id="IPR015421">
    <property type="entry name" value="PyrdxlP-dep_Trfase_major"/>
</dbReference>
<dbReference type="InterPro" id="IPR015422">
    <property type="entry name" value="PyrdxlP-dep_Trfase_small"/>
</dbReference>
<dbReference type="NCBIfam" id="TIGR00713">
    <property type="entry name" value="hemL"/>
    <property type="match status" value="1"/>
</dbReference>
<dbReference type="NCBIfam" id="NF000818">
    <property type="entry name" value="PRK00062.1"/>
    <property type="match status" value="1"/>
</dbReference>
<dbReference type="PANTHER" id="PTHR43713">
    <property type="entry name" value="GLUTAMATE-1-SEMIALDEHYDE 2,1-AMINOMUTASE"/>
    <property type="match status" value="1"/>
</dbReference>
<dbReference type="PANTHER" id="PTHR43713:SF3">
    <property type="entry name" value="GLUTAMATE-1-SEMIALDEHYDE 2,1-AMINOMUTASE 1, CHLOROPLASTIC-RELATED"/>
    <property type="match status" value="1"/>
</dbReference>
<dbReference type="Pfam" id="PF00202">
    <property type="entry name" value="Aminotran_3"/>
    <property type="match status" value="1"/>
</dbReference>
<dbReference type="SUPFAM" id="SSF53383">
    <property type="entry name" value="PLP-dependent transferases"/>
    <property type="match status" value="1"/>
</dbReference>
<dbReference type="PROSITE" id="PS00600">
    <property type="entry name" value="AA_TRANSFER_CLASS_3"/>
    <property type="match status" value="1"/>
</dbReference>
<name>GSA_CROS8</name>
<sequence length="426" mass="45424">MSKSENLFAAARELIPGGVNSPVRAFTGVGGTPLFIERADGAYLYDADGKAYIDYVGSWGPMVLGHNHPAIRNAVIEAAERGLSFGAPTEMEVKMAQLVTELVPTMDMVRMVNSGTEATMSAIRLARGFTRRDKIIKFEGCYHGHADHLLVKAGSGALTLGQPNSPGVPADFAKHTLTCTYNDLASVREAFELYPQDIACIIVEPVAGNMNCIPPQPDFLPGLRALCDEFGALLIIDEVMTGFRVALAGAQAYYNVVPDLTCLGKIIGGGMPVGAFGGRREVMEALAPTGPVYQAGTLSGNPIAMAAGFACLSEVAQPGVHSTLDALTTQLAEGLLDAAQEAGVPLVVNHVGGMFGFFFTDADSVTCYHDVVKCDVERFKRFFHLMLEEGVYFAPSAFEAGFMSVAHSEEDINNTIDAARRVFAKL</sequence>
<gene>
    <name evidence="1" type="primary">hemL</name>
    <name type="ordered locus">ESA_03186</name>
</gene>
<accession>A7MGR5</accession>
<organism>
    <name type="scientific">Cronobacter sakazakii (strain ATCC BAA-894)</name>
    <name type="common">Enterobacter sakazakii</name>
    <dbReference type="NCBI Taxonomy" id="290339"/>
    <lineage>
        <taxon>Bacteria</taxon>
        <taxon>Pseudomonadati</taxon>
        <taxon>Pseudomonadota</taxon>
        <taxon>Gammaproteobacteria</taxon>
        <taxon>Enterobacterales</taxon>
        <taxon>Enterobacteriaceae</taxon>
        <taxon>Cronobacter</taxon>
    </lineage>
</organism>
<reference key="1">
    <citation type="journal article" date="2010" name="PLoS ONE">
        <title>Genome sequence of Cronobacter sakazakii BAA-894 and comparative genomic hybridization analysis with other Cronobacter species.</title>
        <authorList>
            <person name="Kucerova E."/>
            <person name="Clifton S.W."/>
            <person name="Xia X.Q."/>
            <person name="Long F."/>
            <person name="Porwollik S."/>
            <person name="Fulton L."/>
            <person name="Fronick C."/>
            <person name="Minx P."/>
            <person name="Kyung K."/>
            <person name="Warren W."/>
            <person name="Fulton R."/>
            <person name="Feng D."/>
            <person name="Wollam A."/>
            <person name="Shah N."/>
            <person name="Bhonagiri V."/>
            <person name="Nash W.E."/>
            <person name="Hallsworth-Pepin K."/>
            <person name="Wilson R.K."/>
            <person name="McClelland M."/>
            <person name="Forsythe S.J."/>
        </authorList>
    </citation>
    <scope>NUCLEOTIDE SEQUENCE [LARGE SCALE GENOMIC DNA]</scope>
    <source>
        <strain>ATCC BAA-894</strain>
    </source>
</reference>
<protein>
    <recommendedName>
        <fullName evidence="1">Glutamate-1-semialdehyde 2,1-aminomutase</fullName>
        <shortName evidence="1">GSA</shortName>
        <ecNumber evidence="1">5.4.3.8</ecNumber>
    </recommendedName>
    <alternativeName>
        <fullName evidence="1">Glutamate-1-semialdehyde aminotransferase</fullName>
        <shortName evidence="1">GSA-AT</shortName>
    </alternativeName>
</protein>
<comment type="catalytic activity">
    <reaction evidence="1">
        <text>(S)-4-amino-5-oxopentanoate = 5-aminolevulinate</text>
        <dbReference type="Rhea" id="RHEA:14265"/>
        <dbReference type="ChEBI" id="CHEBI:57501"/>
        <dbReference type="ChEBI" id="CHEBI:356416"/>
        <dbReference type="EC" id="5.4.3.8"/>
    </reaction>
</comment>
<comment type="cofactor">
    <cofactor evidence="1">
        <name>pyridoxal 5'-phosphate</name>
        <dbReference type="ChEBI" id="CHEBI:597326"/>
    </cofactor>
</comment>
<comment type="pathway">
    <text evidence="1">Porphyrin-containing compound metabolism; protoporphyrin-IX biosynthesis; 5-aminolevulinate from L-glutamyl-tRNA(Glu): step 2/2.</text>
</comment>
<comment type="subunit">
    <text evidence="1">Homodimer.</text>
</comment>
<comment type="subcellular location">
    <subcellularLocation>
        <location evidence="1">Cytoplasm</location>
    </subcellularLocation>
</comment>
<comment type="similarity">
    <text evidence="1">Belongs to the class-III pyridoxal-phosphate-dependent aminotransferase family. HemL subfamily.</text>
</comment>
<feature type="chain" id="PRO_1000059988" description="Glutamate-1-semialdehyde 2,1-aminomutase">
    <location>
        <begin position="1"/>
        <end position="426"/>
    </location>
</feature>
<feature type="modified residue" description="N6-(pyridoxal phosphate)lysine" evidence="1">
    <location>
        <position position="265"/>
    </location>
</feature>